<gene>
    <name evidence="1" type="primary">rpoC1</name>
</gene>
<evidence type="ECO:0000255" key="1">
    <source>
        <dbReference type="HAMAP-Rule" id="MF_01323"/>
    </source>
</evidence>
<protein>
    <recommendedName>
        <fullName evidence="1">DNA-directed RNA polymerase subunit beta'</fullName>
        <ecNumber evidence="1">2.7.7.6</ecNumber>
    </recommendedName>
    <alternativeName>
        <fullName evidence="1">PEP</fullName>
    </alternativeName>
    <alternativeName>
        <fullName evidence="1">Plastid-encoded RNA polymerase subunit beta'</fullName>
        <shortName evidence="1">RNA polymerase subunit beta'</shortName>
    </alternativeName>
</protein>
<organism>
    <name type="scientific">Acorus calamus var. americanus</name>
    <name type="common">American sweet flag</name>
    <name type="synonym">Acorus americanus</name>
    <dbReference type="NCBI Taxonomy" id="263995"/>
    <lineage>
        <taxon>Eukaryota</taxon>
        <taxon>Viridiplantae</taxon>
        <taxon>Streptophyta</taxon>
        <taxon>Embryophyta</taxon>
        <taxon>Tracheophyta</taxon>
        <taxon>Spermatophyta</taxon>
        <taxon>Magnoliopsida</taxon>
        <taxon>Liliopsida</taxon>
        <taxon>Acoraceae</taxon>
        <taxon>Acorus</taxon>
    </lineage>
</organism>
<name>RPOC1_ACOCI</name>
<sequence length="682" mass="78493">MIDRYKHQQLQIGSVSPQQISAWANKILPNGEIVGEVTKPYTFHYKTNKPEKDGLFCERIFGPIKSGICACGNYRVIGAEKEDPKFCEQCGVEFIDSRIRRYQMGYIKLACPVTHVWYLKRLPSYIANLLDKPLKELEGLVYCDFSFARPIAKKPTFLRLRGLFEYEIQSWKYSIPLFFTTQGFDTFRNREISTGAGAIREQLADLDLRIVIDNSSVEWKDLGDEGSTGNEWEDRKIGRRKDFLVRRMELAKHFIRTNVEPERMVLCLLPVLPPELRPIIQIDGGKLMSSDINELYRRVIYRNNTLTDLLKTSRSTPGELVMCQEKLVQEAVDTLLDNGIRGQPMRDGHNKVYKSFSDVIEGKEGRFRETLLGKRVDYSGRSVIVVGPSLSLHRCGLPREIAIELFQTFVIRGLIRQHLASNIGIAKSKIREKEPIVWEILQEVMQGHPVLLNRAPTLHRLGIQAFQPVLVEGRAICLHPLVCKGFNADFDGDQMAVHVPLSLEAQAEARLLMFSHMNLLSPAIGDPISVPTQDMLIGLYVLTMGNRRGIFVNRYNPCNRRNYQNKTVDNNNYKHTKEKKPYFLSSYDALGAYQQKRINLHSPLWLRWRLDQRVIGSREVPIEVQYESLGTYQEIYGHYLIVRSVKKEILCIYIRTTVGHISFYREIEESVQGFCRAYSYGT</sequence>
<keyword id="KW-0150">Chloroplast</keyword>
<keyword id="KW-0240">DNA-directed RNA polymerase</keyword>
<keyword id="KW-0460">Magnesium</keyword>
<keyword id="KW-0479">Metal-binding</keyword>
<keyword id="KW-0548">Nucleotidyltransferase</keyword>
<keyword id="KW-0934">Plastid</keyword>
<keyword id="KW-0804">Transcription</keyword>
<keyword id="KW-0808">Transferase</keyword>
<keyword id="KW-0862">Zinc</keyword>
<comment type="function">
    <text evidence="1">DNA-dependent RNA polymerase catalyzes the transcription of DNA into RNA using the four ribonucleoside triphosphates as substrates.</text>
</comment>
<comment type="catalytic activity">
    <reaction evidence="1">
        <text>RNA(n) + a ribonucleoside 5'-triphosphate = RNA(n+1) + diphosphate</text>
        <dbReference type="Rhea" id="RHEA:21248"/>
        <dbReference type="Rhea" id="RHEA-COMP:14527"/>
        <dbReference type="Rhea" id="RHEA-COMP:17342"/>
        <dbReference type="ChEBI" id="CHEBI:33019"/>
        <dbReference type="ChEBI" id="CHEBI:61557"/>
        <dbReference type="ChEBI" id="CHEBI:140395"/>
        <dbReference type="EC" id="2.7.7.6"/>
    </reaction>
</comment>
<comment type="cofactor">
    <cofactor evidence="1">
        <name>Mg(2+)</name>
        <dbReference type="ChEBI" id="CHEBI:18420"/>
    </cofactor>
    <text evidence="1">Binds 1 Mg(2+) ion per subunit.</text>
</comment>
<comment type="cofactor">
    <cofactor evidence="1">
        <name>Zn(2+)</name>
        <dbReference type="ChEBI" id="CHEBI:29105"/>
    </cofactor>
    <text evidence="1">Binds 1 Zn(2+) ion per subunit.</text>
</comment>
<comment type="subunit">
    <text evidence="1">In plastids the minimal PEP RNA polymerase catalytic core is composed of four subunits: alpha, beta, beta', and beta''. When a (nuclear-encoded) sigma factor is associated with the core the holoenzyme is formed, which can initiate transcription.</text>
</comment>
<comment type="subcellular location">
    <subcellularLocation>
        <location evidence="1">Plastid</location>
        <location evidence="1">Chloroplast</location>
    </subcellularLocation>
</comment>
<comment type="similarity">
    <text evidence="1">Belongs to the RNA polymerase beta' chain family. RpoC1 subfamily.</text>
</comment>
<dbReference type="EC" id="2.7.7.6" evidence="1"/>
<dbReference type="EMBL" id="EU273602">
    <property type="protein sequence ID" value="ABX38735.1"/>
    <property type="molecule type" value="Genomic_DNA"/>
</dbReference>
<dbReference type="RefSeq" id="YP_001586173.1">
    <property type="nucleotide sequence ID" value="NC_010093.1"/>
</dbReference>
<dbReference type="SMR" id="A9LYH6"/>
<dbReference type="GeneID" id="5777777"/>
<dbReference type="GO" id="GO:0009507">
    <property type="term" value="C:chloroplast"/>
    <property type="evidence" value="ECO:0007669"/>
    <property type="project" value="UniProtKB-SubCell"/>
</dbReference>
<dbReference type="GO" id="GO:0000428">
    <property type="term" value="C:DNA-directed RNA polymerase complex"/>
    <property type="evidence" value="ECO:0007669"/>
    <property type="project" value="UniProtKB-KW"/>
</dbReference>
<dbReference type="GO" id="GO:0005739">
    <property type="term" value="C:mitochondrion"/>
    <property type="evidence" value="ECO:0007669"/>
    <property type="project" value="GOC"/>
</dbReference>
<dbReference type="GO" id="GO:0003677">
    <property type="term" value="F:DNA binding"/>
    <property type="evidence" value="ECO:0007669"/>
    <property type="project" value="UniProtKB-UniRule"/>
</dbReference>
<dbReference type="GO" id="GO:0003899">
    <property type="term" value="F:DNA-directed RNA polymerase activity"/>
    <property type="evidence" value="ECO:0007669"/>
    <property type="project" value="UniProtKB-UniRule"/>
</dbReference>
<dbReference type="GO" id="GO:0000287">
    <property type="term" value="F:magnesium ion binding"/>
    <property type="evidence" value="ECO:0007669"/>
    <property type="project" value="UniProtKB-UniRule"/>
</dbReference>
<dbReference type="GO" id="GO:0008270">
    <property type="term" value="F:zinc ion binding"/>
    <property type="evidence" value="ECO:0007669"/>
    <property type="project" value="UniProtKB-UniRule"/>
</dbReference>
<dbReference type="GO" id="GO:0006351">
    <property type="term" value="P:DNA-templated transcription"/>
    <property type="evidence" value="ECO:0007669"/>
    <property type="project" value="UniProtKB-UniRule"/>
</dbReference>
<dbReference type="FunFam" id="1.10.40.90:FF:000002">
    <property type="entry name" value="DNA-directed RNA polymerase subunit"/>
    <property type="match status" value="1"/>
</dbReference>
<dbReference type="FunFam" id="4.10.860.120:FF:000007">
    <property type="entry name" value="DNA-directed RNA polymerase subunit gamma"/>
    <property type="match status" value="1"/>
</dbReference>
<dbReference type="Gene3D" id="1.10.40.90">
    <property type="match status" value="1"/>
</dbReference>
<dbReference type="Gene3D" id="2.40.40.20">
    <property type="match status" value="1"/>
</dbReference>
<dbReference type="Gene3D" id="4.10.860.120">
    <property type="entry name" value="RNA polymerase II, clamp domain"/>
    <property type="match status" value="1"/>
</dbReference>
<dbReference type="Gene3D" id="1.10.274.100">
    <property type="entry name" value="RNA polymerase Rpb1, domain 3"/>
    <property type="match status" value="1"/>
</dbReference>
<dbReference type="HAMAP" id="MF_01323">
    <property type="entry name" value="RNApol_bact_RpoC1"/>
    <property type="match status" value="1"/>
</dbReference>
<dbReference type="InterPro" id="IPR045867">
    <property type="entry name" value="DNA-dir_RpoC_beta_prime"/>
</dbReference>
<dbReference type="InterPro" id="IPR000722">
    <property type="entry name" value="RNA_pol_asu"/>
</dbReference>
<dbReference type="InterPro" id="IPR006592">
    <property type="entry name" value="RNA_pol_N"/>
</dbReference>
<dbReference type="InterPro" id="IPR007080">
    <property type="entry name" value="RNA_pol_Rpb1_1"/>
</dbReference>
<dbReference type="InterPro" id="IPR042102">
    <property type="entry name" value="RNA_pol_Rpb1_3_sf"/>
</dbReference>
<dbReference type="InterPro" id="IPR044893">
    <property type="entry name" value="RNA_pol_Rpb1_clamp_domain"/>
</dbReference>
<dbReference type="InterPro" id="IPR034678">
    <property type="entry name" value="RNApol_RpoC1"/>
</dbReference>
<dbReference type="PANTHER" id="PTHR19376">
    <property type="entry name" value="DNA-DIRECTED RNA POLYMERASE"/>
    <property type="match status" value="1"/>
</dbReference>
<dbReference type="PANTHER" id="PTHR19376:SF54">
    <property type="entry name" value="DNA-DIRECTED RNA POLYMERASE SUBUNIT BETA"/>
    <property type="match status" value="1"/>
</dbReference>
<dbReference type="Pfam" id="PF04997">
    <property type="entry name" value="RNA_pol_Rpb1_1"/>
    <property type="match status" value="1"/>
</dbReference>
<dbReference type="Pfam" id="PF00623">
    <property type="entry name" value="RNA_pol_Rpb1_2"/>
    <property type="match status" value="1"/>
</dbReference>
<dbReference type="SMART" id="SM00663">
    <property type="entry name" value="RPOLA_N"/>
    <property type="match status" value="1"/>
</dbReference>
<dbReference type="SUPFAM" id="SSF64484">
    <property type="entry name" value="beta and beta-prime subunits of DNA dependent RNA-polymerase"/>
    <property type="match status" value="1"/>
</dbReference>
<geneLocation type="chloroplast"/>
<reference key="1">
    <citation type="submission" date="2007-11" db="EMBL/GenBank/DDBJ databases">
        <title>The complete chloroplast genome of Acorus americanus.</title>
        <authorList>
            <person name="Peery R.M."/>
            <person name="Chumley T.W."/>
            <person name="Kuehl J.V."/>
            <person name="Boore J.L."/>
            <person name="Raubeson L.A."/>
        </authorList>
    </citation>
    <scope>NUCLEOTIDE SEQUENCE [LARGE SCALE GENOMIC DNA]</scope>
</reference>
<feature type="chain" id="PRO_0000353469" description="DNA-directed RNA polymerase subunit beta'">
    <location>
        <begin position="1"/>
        <end position="682"/>
    </location>
</feature>
<feature type="binding site" evidence="1">
    <location>
        <position position="69"/>
    </location>
    <ligand>
        <name>Zn(2+)</name>
        <dbReference type="ChEBI" id="CHEBI:29105"/>
    </ligand>
</feature>
<feature type="binding site" evidence="1">
    <location>
        <position position="71"/>
    </location>
    <ligand>
        <name>Zn(2+)</name>
        <dbReference type="ChEBI" id="CHEBI:29105"/>
    </ligand>
</feature>
<feature type="binding site" evidence="1">
    <location>
        <position position="87"/>
    </location>
    <ligand>
        <name>Zn(2+)</name>
        <dbReference type="ChEBI" id="CHEBI:29105"/>
    </ligand>
</feature>
<feature type="binding site" evidence="1">
    <location>
        <position position="90"/>
    </location>
    <ligand>
        <name>Zn(2+)</name>
        <dbReference type="ChEBI" id="CHEBI:29105"/>
    </ligand>
</feature>
<feature type="binding site" evidence="1">
    <location>
        <position position="489"/>
    </location>
    <ligand>
        <name>Mg(2+)</name>
        <dbReference type="ChEBI" id="CHEBI:18420"/>
    </ligand>
</feature>
<feature type="binding site" evidence="1">
    <location>
        <position position="491"/>
    </location>
    <ligand>
        <name>Mg(2+)</name>
        <dbReference type="ChEBI" id="CHEBI:18420"/>
    </ligand>
</feature>
<feature type="binding site" evidence="1">
    <location>
        <position position="493"/>
    </location>
    <ligand>
        <name>Mg(2+)</name>
        <dbReference type="ChEBI" id="CHEBI:18420"/>
    </ligand>
</feature>
<accession>A9LYH6</accession>
<proteinExistence type="inferred from homology"/>